<reference key="1">
    <citation type="journal article" date="1989" name="J. Cell Biol.">
        <title>Ultrastructural localization of giardins to the edges of disk microribbons of Giarida lamblia and the nucleotide and deduced protein sequence of alpha giardin.</title>
        <authorList>
            <person name="Peattie D.A."/>
            <person name="Alonso R.A."/>
            <person name="Hein A."/>
            <person name="Caulfield J.P."/>
        </authorList>
    </citation>
    <scope>NUCLEOTIDE SEQUENCE [GENOMIC DNA]</scope>
    <scope>PROTEIN SEQUENCE OF 3-31</scope>
    <source>
        <strain>Portland-1</strain>
    </source>
</reference>
<reference key="2">
    <citation type="journal article" date="1992" name="Mol. Biochem. Parasitol.">
        <title>Nucleotide sequence of a second alpha giardin gene and molecular analysis of the alpha giardin genes and transcripts in Giardia lamblia.</title>
        <authorList>
            <person name="Alonso R.A."/>
            <person name="Peattie D.A."/>
        </authorList>
    </citation>
    <scope>NUCLEOTIDE SEQUENCE [GENOMIC DNA]</scope>
    <source>
        <strain>Portland-1</strain>
    </source>
</reference>
<sequence>MPKVTDIANELKQAIDAKDEVQIAFIASEYSAESREKIAKAYVASYGKELPDDIKKALKGGSEESLLMDLFSDRHEVRAQHIRDALSGRNDHMAFFDTVILCTPEDWHETVAAYTRMFKKPLVEDFMKDVGRKEDWCLLMEKWMAHERVSRPGSPEDEAQRLDQAFDQKNTAYLIDFFGTVPSAEYRPIAEAFKAQNGKSIEQAIATIYTKTDYYTFYCAHFALLGMHRLAAYLINCACNDKGDEKRMRRITGMMVDKCLGAKHAYKIYGDMGTDIERCFDKRMAPILRTLWRVK</sequence>
<protein>
    <recommendedName>
        <fullName>Giardin subunit alpha-1</fullName>
    </recommendedName>
</protein>
<keyword id="KW-0002">3D-structure</keyword>
<keyword id="KW-0041">Annexin</keyword>
<keyword id="KW-0963">Cytoplasm</keyword>
<keyword id="KW-0206">Cytoskeleton</keyword>
<keyword id="KW-0903">Direct protein sequencing</keyword>
<keyword id="KW-0493">Microtubule</keyword>
<keyword id="KW-0677">Repeat</keyword>
<feature type="chain" id="PRO_0000067522" description="Giardin subunit alpha-1">
    <location>
        <begin position="1"/>
        <end position="295"/>
    </location>
</feature>
<feature type="repeat" description="Annexin 1" evidence="1">
    <location>
        <begin position="2"/>
        <end position="71"/>
    </location>
</feature>
<feature type="repeat" description="Annexin 2" evidence="1">
    <location>
        <begin position="73"/>
        <end position="143"/>
    </location>
</feature>
<feature type="repeat" description="Annexin 3" evidence="1">
    <location>
        <begin position="153"/>
        <end position="223"/>
    </location>
</feature>
<feature type="repeat" description="Annexin 4" evidence="1">
    <location>
        <begin position="226"/>
        <end position="293"/>
    </location>
</feature>
<feature type="helix" evidence="2">
    <location>
        <begin position="4"/>
        <end position="16"/>
    </location>
</feature>
<feature type="helix" evidence="2">
    <location>
        <begin position="20"/>
        <end position="28"/>
    </location>
</feature>
<feature type="helix" evidence="2">
    <location>
        <begin position="32"/>
        <end position="46"/>
    </location>
</feature>
<feature type="helix" evidence="2">
    <location>
        <begin position="50"/>
        <end position="57"/>
    </location>
</feature>
<feature type="helix" evidence="2">
    <location>
        <begin position="62"/>
        <end position="70"/>
    </location>
</feature>
<feature type="helix" evidence="2">
    <location>
        <begin position="74"/>
        <end position="87"/>
    </location>
</feature>
<feature type="helix" evidence="2">
    <location>
        <begin position="92"/>
        <end position="99"/>
    </location>
</feature>
<feature type="helix" evidence="2">
    <location>
        <begin position="104"/>
        <end position="118"/>
    </location>
</feature>
<feature type="helix" evidence="2">
    <location>
        <begin position="122"/>
        <end position="130"/>
    </location>
</feature>
<feature type="strand" evidence="2">
    <location>
        <begin position="132"/>
        <end position="134"/>
    </location>
</feature>
<feature type="helix" evidence="2">
    <location>
        <begin position="135"/>
        <end position="145"/>
    </location>
</feature>
<feature type="helix" evidence="2">
    <location>
        <begin position="155"/>
        <end position="167"/>
    </location>
</feature>
<feature type="helix" evidence="2">
    <location>
        <begin position="171"/>
        <end position="180"/>
    </location>
</feature>
<feature type="helix" evidence="2">
    <location>
        <begin position="183"/>
        <end position="196"/>
    </location>
</feature>
<feature type="strand" evidence="2">
    <location>
        <begin position="197"/>
        <end position="199"/>
    </location>
</feature>
<feature type="helix" evidence="2">
    <location>
        <begin position="201"/>
        <end position="208"/>
    </location>
</feature>
<feature type="helix" evidence="2">
    <location>
        <begin position="211"/>
        <end position="225"/>
    </location>
</feature>
<feature type="helix" evidence="2">
    <location>
        <begin position="227"/>
        <end position="240"/>
    </location>
</feature>
<feature type="helix" evidence="2">
    <location>
        <begin position="245"/>
        <end position="255"/>
    </location>
</feature>
<feature type="helix" evidence="2">
    <location>
        <begin position="256"/>
        <end position="258"/>
    </location>
</feature>
<feature type="helix" evidence="2">
    <location>
        <begin position="262"/>
        <end position="265"/>
    </location>
</feature>
<feature type="helix" evidence="2">
    <location>
        <begin position="266"/>
        <end position="268"/>
    </location>
</feature>
<feature type="helix" evidence="2">
    <location>
        <begin position="272"/>
        <end position="279"/>
    </location>
</feature>
<feature type="helix" evidence="2">
    <location>
        <begin position="284"/>
        <end position="292"/>
    </location>
</feature>
<name>GIA1_GIAIN</name>
<organism>
    <name type="scientific">Giardia intestinalis</name>
    <name type="common">Giardia lamblia</name>
    <dbReference type="NCBI Taxonomy" id="5741"/>
    <lineage>
        <taxon>Eukaryota</taxon>
        <taxon>Metamonada</taxon>
        <taxon>Diplomonadida</taxon>
        <taxon>Hexamitidae</taxon>
        <taxon>Giardiinae</taxon>
        <taxon>Giardia</taxon>
    </lineage>
</organism>
<evidence type="ECO:0000255" key="1">
    <source>
        <dbReference type="PROSITE-ProRule" id="PRU01245"/>
    </source>
</evidence>
<evidence type="ECO:0007829" key="2">
    <source>
        <dbReference type="PDB" id="4EVF"/>
    </source>
</evidence>
<dbReference type="EMBL" id="X52485">
    <property type="protein sequence ID" value="CAA36727.1"/>
    <property type="molecule type" value="Genomic_DNA"/>
</dbReference>
<dbReference type="PIR" id="A33735">
    <property type="entry name" value="A33735"/>
</dbReference>
<dbReference type="RefSeq" id="XP_001704310.1">
    <property type="nucleotide sequence ID" value="XM_001704258.1"/>
</dbReference>
<dbReference type="PDB" id="4EVF">
    <property type="method" value="X-ray"/>
    <property type="resolution" value="1.90 A"/>
    <property type="chains" value="A=1-295"/>
</dbReference>
<dbReference type="PDB" id="4EVH">
    <property type="method" value="X-ray"/>
    <property type="resolution" value="2.60 A"/>
    <property type="chains" value="A=1-295"/>
</dbReference>
<dbReference type="PDBsum" id="4EVF"/>
<dbReference type="PDBsum" id="4EVH"/>
<dbReference type="SMR" id="P17063"/>
<dbReference type="GeneID" id="5697168"/>
<dbReference type="KEGG" id="gla:GL50803_0011654"/>
<dbReference type="VEuPathDB" id="GiardiaDB:DHA2_11654"/>
<dbReference type="VEuPathDB" id="GiardiaDB:GL50581_1672"/>
<dbReference type="VEuPathDB" id="GiardiaDB:GL50803_0011654"/>
<dbReference type="VEuPathDB" id="GiardiaDB:QR46_3708"/>
<dbReference type="OrthoDB" id="10248358at2759"/>
<dbReference type="EvolutionaryTrace" id="P17063"/>
<dbReference type="GO" id="GO:0005737">
    <property type="term" value="C:cytoplasm"/>
    <property type="evidence" value="ECO:0007669"/>
    <property type="project" value="UniProtKB-KW"/>
</dbReference>
<dbReference type="GO" id="GO:0005874">
    <property type="term" value="C:microtubule"/>
    <property type="evidence" value="ECO:0007669"/>
    <property type="project" value="UniProtKB-KW"/>
</dbReference>
<dbReference type="GO" id="GO:0005886">
    <property type="term" value="C:plasma membrane"/>
    <property type="evidence" value="ECO:0007669"/>
    <property type="project" value="TreeGrafter"/>
</dbReference>
<dbReference type="GO" id="GO:0005509">
    <property type="term" value="F:calcium ion binding"/>
    <property type="evidence" value="ECO:0007669"/>
    <property type="project" value="InterPro"/>
</dbReference>
<dbReference type="GO" id="GO:0005544">
    <property type="term" value="F:calcium-dependent phospholipid binding"/>
    <property type="evidence" value="ECO:0007669"/>
    <property type="project" value="InterPro"/>
</dbReference>
<dbReference type="GO" id="GO:0001786">
    <property type="term" value="F:phosphatidylserine binding"/>
    <property type="evidence" value="ECO:0007669"/>
    <property type="project" value="TreeGrafter"/>
</dbReference>
<dbReference type="GO" id="GO:0007010">
    <property type="term" value="P:cytoskeleton organization"/>
    <property type="evidence" value="ECO:0007669"/>
    <property type="project" value="InterPro"/>
</dbReference>
<dbReference type="Gene3D" id="1.10.220.10">
    <property type="entry name" value="Annexin"/>
    <property type="match status" value="4"/>
</dbReference>
<dbReference type="InterPro" id="IPR008088">
    <property type="entry name" value="Alpha_giardin"/>
</dbReference>
<dbReference type="InterPro" id="IPR018502">
    <property type="entry name" value="Annexin_repeat"/>
</dbReference>
<dbReference type="InterPro" id="IPR037104">
    <property type="entry name" value="Annexin_sf"/>
</dbReference>
<dbReference type="PANTHER" id="PTHR10502">
    <property type="entry name" value="ANNEXIN"/>
    <property type="match status" value="1"/>
</dbReference>
<dbReference type="PANTHER" id="PTHR10502:SF102">
    <property type="entry name" value="ANNEXIN B11"/>
    <property type="match status" value="1"/>
</dbReference>
<dbReference type="Pfam" id="PF00191">
    <property type="entry name" value="Annexin"/>
    <property type="match status" value="1"/>
</dbReference>
<dbReference type="Pfam" id="PF22293">
    <property type="entry name" value="ANXE1_4th"/>
    <property type="match status" value="1"/>
</dbReference>
<dbReference type="PRINTS" id="PR01712">
    <property type="entry name" value="ALPHAGIARDIN"/>
</dbReference>
<dbReference type="SMART" id="SM00335">
    <property type="entry name" value="ANX"/>
    <property type="match status" value="1"/>
</dbReference>
<dbReference type="SUPFAM" id="SSF47874">
    <property type="entry name" value="Annexin"/>
    <property type="match status" value="1"/>
</dbReference>
<dbReference type="PROSITE" id="PS51897">
    <property type="entry name" value="ANNEXIN_2"/>
    <property type="match status" value="4"/>
</dbReference>
<accession>P17063</accession>
<proteinExistence type="evidence at protein level"/>
<comment type="function">
    <text>Giardins are involved in parasite attachment to the intestinal mucosa and in the cytoskeletal disassembly and reassembly that marks the transition from infectious trophozoite to transmissible cyst. They may interact with other cytoskeletal proteins such as microtubules in the microribbons or crossbridges, to maintain the integrity of the ventral disk.</text>
</comment>
<comment type="subcellular location">
    <subcellularLocation>
        <location>Cytoplasm</location>
        <location>Cytoskeleton</location>
    </subcellularLocation>
    <text>Most likely in the edges of the ventral disk microribbons.</text>
</comment>
<comment type="similarity">
    <text evidence="1">Belongs to the annexin family. Giardin subunit alpha subfamily.</text>
</comment>